<organism>
    <name type="scientific">Rhizobium rhizogenes (strain K84 / ATCC BAA-868)</name>
    <name type="common">Agrobacterium radiobacter</name>
    <dbReference type="NCBI Taxonomy" id="311403"/>
    <lineage>
        <taxon>Bacteria</taxon>
        <taxon>Pseudomonadati</taxon>
        <taxon>Pseudomonadota</taxon>
        <taxon>Alphaproteobacteria</taxon>
        <taxon>Hyphomicrobiales</taxon>
        <taxon>Rhizobiaceae</taxon>
        <taxon>Rhizobium/Agrobacterium group</taxon>
        <taxon>Rhizobium</taxon>
    </lineage>
</organism>
<feature type="chain" id="PRO_1000149004" description="NAD(P)H dehydrogenase (quinone)">
    <location>
        <begin position="1"/>
        <end position="199"/>
    </location>
</feature>
<feature type="domain" description="Flavodoxin-like" evidence="1">
    <location>
        <begin position="4"/>
        <end position="190"/>
    </location>
</feature>
<feature type="binding site" evidence="1">
    <location>
        <begin position="10"/>
        <end position="15"/>
    </location>
    <ligand>
        <name>FMN</name>
        <dbReference type="ChEBI" id="CHEBI:58210"/>
    </ligand>
</feature>
<feature type="binding site" evidence="1">
    <location>
        <position position="12"/>
    </location>
    <ligand>
        <name>NAD(+)</name>
        <dbReference type="ChEBI" id="CHEBI:57540"/>
    </ligand>
</feature>
<feature type="binding site" evidence="1">
    <location>
        <begin position="78"/>
        <end position="80"/>
    </location>
    <ligand>
        <name>FMN</name>
        <dbReference type="ChEBI" id="CHEBI:58210"/>
    </ligand>
</feature>
<feature type="binding site" evidence="1">
    <location>
        <position position="98"/>
    </location>
    <ligand>
        <name>substrate</name>
    </ligand>
</feature>
<feature type="binding site" evidence="1">
    <location>
        <begin position="113"/>
        <end position="119"/>
    </location>
    <ligand>
        <name>FMN</name>
        <dbReference type="ChEBI" id="CHEBI:58210"/>
    </ligand>
</feature>
<feature type="binding site" evidence="1">
    <location>
        <position position="134"/>
    </location>
    <ligand>
        <name>FMN</name>
        <dbReference type="ChEBI" id="CHEBI:58210"/>
    </ligand>
</feature>
<dbReference type="EC" id="1.6.5.2" evidence="1"/>
<dbReference type="EMBL" id="CP000628">
    <property type="protein sequence ID" value="ACM26340.1"/>
    <property type="molecule type" value="Genomic_DNA"/>
</dbReference>
<dbReference type="SMR" id="B9JEB9"/>
<dbReference type="STRING" id="311403.Arad_2057"/>
<dbReference type="KEGG" id="ara:Arad_2057"/>
<dbReference type="eggNOG" id="COG0655">
    <property type="taxonomic scope" value="Bacteria"/>
</dbReference>
<dbReference type="HOGENOM" id="CLU_051402_0_2_5"/>
<dbReference type="Proteomes" id="UP000001600">
    <property type="component" value="Chromosome 1"/>
</dbReference>
<dbReference type="GO" id="GO:0016020">
    <property type="term" value="C:membrane"/>
    <property type="evidence" value="ECO:0007669"/>
    <property type="project" value="TreeGrafter"/>
</dbReference>
<dbReference type="GO" id="GO:0050660">
    <property type="term" value="F:flavin adenine dinucleotide binding"/>
    <property type="evidence" value="ECO:0007669"/>
    <property type="project" value="UniProtKB-UniRule"/>
</dbReference>
<dbReference type="GO" id="GO:0010181">
    <property type="term" value="F:FMN binding"/>
    <property type="evidence" value="ECO:0007669"/>
    <property type="project" value="InterPro"/>
</dbReference>
<dbReference type="GO" id="GO:0051287">
    <property type="term" value="F:NAD binding"/>
    <property type="evidence" value="ECO:0007669"/>
    <property type="project" value="UniProtKB-UniRule"/>
</dbReference>
<dbReference type="GO" id="GO:0050136">
    <property type="term" value="F:NADH:ubiquinone reductase (non-electrogenic) activity"/>
    <property type="evidence" value="ECO:0007669"/>
    <property type="project" value="RHEA"/>
</dbReference>
<dbReference type="GO" id="GO:0050661">
    <property type="term" value="F:NADP binding"/>
    <property type="evidence" value="ECO:0007669"/>
    <property type="project" value="UniProtKB-UniRule"/>
</dbReference>
<dbReference type="GO" id="GO:0008753">
    <property type="term" value="F:NADPH dehydrogenase (quinone) activity"/>
    <property type="evidence" value="ECO:0007669"/>
    <property type="project" value="RHEA"/>
</dbReference>
<dbReference type="FunFam" id="3.40.50.360:FF:000001">
    <property type="entry name" value="NAD(P)H dehydrogenase (Quinone) FQR1-like"/>
    <property type="match status" value="1"/>
</dbReference>
<dbReference type="Gene3D" id="3.40.50.360">
    <property type="match status" value="1"/>
</dbReference>
<dbReference type="HAMAP" id="MF_01017">
    <property type="entry name" value="NQOR"/>
    <property type="match status" value="1"/>
</dbReference>
<dbReference type="InterPro" id="IPR008254">
    <property type="entry name" value="Flavodoxin/NO_synth"/>
</dbReference>
<dbReference type="InterPro" id="IPR029039">
    <property type="entry name" value="Flavoprotein-like_sf"/>
</dbReference>
<dbReference type="InterPro" id="IPR010089">
    <property type="entry name" value="Flavoprotein_WrbA-like"/>
</dbReference>
<dbReference type="InterPro" id="IPR037513">
    <property type="entry name" value="NQO"/>
</dbReference>
<dbReference type="NCBIfam" id="TIGR01755">
    <property type="entry name" value="flav_wrbA"/>
    <property type="match status" value="1"/>
</dbReference>
<dbReference type="NCBIfam" id="NF002999">
    <property type="entry name" value="PRK03767.1"/>
    <property type="match status" value="1"/>
</dbReference>
<dbReference type="PANTHER" id="PTHR30546">
    <property type="entry name" value="FLAVODOXIN-RELATED PROTEIN WRBA-RELATED"/>
    <property type="match status" value="1"/>
</dbReference>
<dbReference type="PANTHER" id="PTHR30546:SF23">
    <property type="entry name" value="FLAVOPROTEIN-LIKE PROTEIN YCP4-RELATED"/>
    <property type="match status" value="1"/>
</dbReference>
<dbReference type="Pfam" id="PF00258">
    <property type="entry name" value="Flavodoxin_1"/>
    <property type="match status" value="1"/>
</dbReference>
<dbReference type="SUPFAM" id="SSF52218">
    <property type="entry name" value="Flavoproteins"/>
    <property type="match status" value="1"/>
</dbReference>
<dbReference type="PROSITE" id="PS50902">
    <property type="entry name" value="FLAVODOXIN_LIKE"/>
    <property type="match status" value="1"/>
</dbReference>
<name>NQOR_RHIR8</name>
<evidence type="ECO:0000255" key="1">
    <source>
        <dbReference type="HAMAP-Rule" id="MF_01017"/>
    </source>
</evidence>
<accession>B9JEB9</accession>
<proteinExistence type="inferred from homology"/>
<reference key="1">
    <citation type="journal article" date="2009" name="J. Bacteriol.">
        <title>Genome sequences of three Agrobacterium biovars help elucidate the evolution of multichromosome genomes in bacteria.</title>
        <authorList>
            <person name="Slater S.C."/>
            <person name="Goldman B.S."/>
            <person name="Goodner B."/>
            <person name="Setubal J.C."/>
            <person name="Farrand S.K."/>
            <person name="Nester E.W."/>
            <person name="Burr T.J."/>
            <person name="Banta L."/>
            <person name="Dickerman A.W."/>
            <person name="Paulsen I."/>
            <person name="Otten L."/>
            <person name="Suen G."/>
            <person name="Welch R."/>
            <person name="Almeida N.F."/>
            <person name="Arnold F."/>
            <person name="Burton O.T."/>
            <person name="Du Z."/>
            <person name="Ewing A."/>
            <person name="Godsy E."/>
            <person name="Heisel S."/>
            <person name="Houmiel K.L."/>
            <person name="Jhaveri J."/>
            <person name="Lu J."/>
            <person name="Miller N.M."/>
            <person name="Norton S."/>
            <person name="Chen Q."/>
            <person name="Phoolcharoen W."/>
            <person name="Ohlin V."/>
            <person name="Ondrusek D."/>
            <person name="Pride N."/>
            <person name="Stricklin S.L."/>
            <person name="Sun J."/>
            <person name="Wheeler C."/>
            <person name="Wilson L."/>
            <person name="Zhu H."/>
            <person name="Wood D.W."/>
        </authorList>
    </citation>
    <scope>NUCLEOTIDE SEQUENCE [LARGE SCALE GENOMIC DNA]</scope>
    <source>
        <strain>K84 / ATCC BAA-868</strain>
    </source>
</reference>
<gene>
    <name type="ordered locus">Arad_2057</name>
</gene>
<keyword id="KW-0285">Flavoprotein</keyword>
<keyword id="KW-0288">FMN</keyword>
<keyword id="KW-0520">NAD</keyword>
<keyword id="KW-0521">NADP</keyword>
<keyword id="KW-0547">Nucleotide-binding</keyword>
<keyword id="KW-0560">Oxidoreductase</keyword>
<protein>
    <recommendedName>
        <fullName evidence="1">NAD(P)H dehydrogenase (quinone)</fullName>
        <ecNumber evidence="1">1.6.5.2</ecNumber>
    </recommendedName>
    <alternativeName>
        <fullName>Flavoprotein WrbA</fullName>
    </alternativeName>
    <alternativeName>
        <fullName evidence="1">NAD(P)H:quinone oxidoreductase</fullName>
        <shortName evidence="1">NQO</shortName>
    </alternativeName>
</protein>
<comment type="catalytic activity">
    <reaction evidence="1">
        <text>a quinone + NADH + H(+) = a quinol + NAD(+)</text>
        <dbReference type="Rhea" id="RHEA:46160"/>
        <dbReference type="ChEBI" id="CHEBI:15378"/>
        <dbReference type="ChEBI" id="CHEBI:24646"/>
        <dbReference type="ChEBI" id="CHEBI:57540"/>
        <dbReference type="ChEBI" id="CHEBI:57945"/>
        <dbReference type="ChEBI" id="CHEBI:132124"/>
        <dbReference type="EC" id="1.6.5.2"/>
    </reaction>
</comment>
<comment type="catalytic activity">
    <reaction evidence="1">
        <text>a quinone + NADPH + H(+) = a quinol + NADP(+)</text>
        <dbReference type="Rhea" id="RHEA:46164"/>
        <dbReference type="ChEBI" id="CHEBI:15378"/>
        <dbReference type="ChEBI" id="CHEBI:24646"/>
        <dbReference type="ChEBI" id="CHEBI:57783"/>
        <dbReference type="ChEBI" id="CHEBI:58349"/>
        <dbReference type="ChEBI" id="CHEBI:132124"/>
        <dbReference type="EC" id="1.6.5.2"/>
    </reaction>
</comment>
<comment type="cofactor">
    <cofactor evidence="1">
        <name>FMN</name>
        <dbReference type="ChEBI" id="CHEBI:58210"/>
    </cofactor>
    <text evidence="1">Binds 1 FMN per monomer.</text>
</comment>
<comment type="similarity">
    <text evidence="1">Belongs to the WrbA family.</text>
</comment>
<sequence length="199" mass="20915">MAKVLVLYYSAYGHIEKMAYAVAEGAKSAGAEVTVKRVPELVPEEVAKASYFKLDQEAPIATPDELAEYDAIIVGAGTRFGTVASQMRNFWDQTGGLWFSGKLVGKVGSVFTSSATQHGGQESTILGFIPTLLHHGMAVVGLPYAFAGQMGTEEVKGGSPYGASTITNGDGSRQPSEIELEAAKYQGAHVAKIAAKLVA</sequence>